<name>NAGB_STRPQ</name>
<reference key="1">
    <citation type="journal article" date="2003" name="Genome Res.">
        <title>Genome sequence of an M3 strain of Streptococcus pyogenes reveals a large-scale genomic rearrangement in invasive strains and new insights into phage evolution.</title>
        <authorList>
            <person name="Nakagawa I."/>
            <person name="Kurokawa K."/>
            <person name="Yamashita A."/>
            <person name="Nakata M."/>
            <person name="Tomiyasu Y."/>
            <person name="Okahashi N."/>
            <person name="Kawabata S."/>
            <person name="Yamazaki K."/>
            <person name="Shiba T."/>
            <person name="Yasunaga T."/>
            <person name="Hayashi H."/>
            <person name="Hattori M."/>
            <person name="Hamada S."/>
        </authorList>
    </citation>
    <scope>NUCLEOTIDE SEQUENCE [LARGE SCALE GENOMIC DNA]</scope>
    <source>
        <strain>SSI-1</strain>
    </source>
</reference>
<sequence>MKIIRVQDQIEGGKIAFTLLKDSLAKGAKTLGLATGSSPISFYQEMVKSPLDFSDLTSINLDEYVGLSVESDQSYDYFMRQNLFNAKPFKKNYLPNGLATDIEAEAKRYDQIIAEHPIDFQVLGIGRNGHIGFNEPGTSFEEETHVVDLQESTIEANSRFFTSIEDVPKQAISMGIASIMKSKMIVLLAFGQEKADAIKGMVFGPITEDLPASILQKHDHVIVIVDEAAASQLD</sequence>
<proteinExistence type="inferred from homology"/>
<comment type="function">
    <text evidence="1">Catalyzes the reversible isomerization-deamination of glucosamine 6-phosphate (GlcN6P) to form fructose 6-phosphate (Fru6P) and ammonium ion.</text>
</comment>
<comment type="catalytic activity">
    <reaction evidence="1">
        <text>alpha-D-glucosamine 6-phosphate + H2O = beta-D-fructose 6-phosphate + NH4(+)</text>
        <dbReference type="Rhea" id="RHEA:12172"/>
        <dbReference type="ChEBI" id="CHEBI:15377"/>
        <dbReference type="ChEBI" id="CHEBI:28938"/>
        <dbReference type="ChEBI" id="CHEBI:57634"/>
        <dbReference type="ChEBI" id="CHEBI:75989"/>
        <dbReference type="EC" id="3.5.99.6"/>
    </reaction>
</comment>
<comment type="pathway">
    <text evidence="1">Amino-sugar metabolism; N-acetylneuraminate degradation; D-fructose 6-phosphate from N-acetylneuraminate: step 5/5.</text>
</comment>
<comment type="similarity">
    <text evidence="1">Belongs to the glucosamine/galactosamine-6-phosphate isomerase family. NagB subfamily.</text>
</comment>
<feature type="chain" id="PRO_0000411421" description="Glucosamine-6-phosphate deaminase">
    <location>
        <begin position="1"/>
        <end position="234"/>
    </location>
</feature>
<feature type="active site" description="Proton acceptor; for enolization step" evidence="1">
    <location>
        <position position="62"/>
    </location>
</feature>
<feature type="active site" description="For ring-opening step" evidence="1">
    <location>
        <position position="128"/>
    </location>
</feature>
<feature type="active site" description="Proton acceptor; for ring-opening step" evidence="1">
    <location>
        <position position="130"/>
    </location>
</feature>
<feature type="active site" description="For ring-opening step" evidence="1">
    <location>
        <position position="135"/>
    </location>
</feature>
<dbReference type="EC" id="3.5.99.6" evidence="1"/>
<dbReference type="EMBL" id="BA000034">
    <property type="protein sequence ID" value="BAC63893.1"/>
    <property type="molecule type" value="Genomic_DNA"/>
</dbReference>
<dbReference type="RefSeq" id="WP_002995779.1">
    <property type="nucleotide sequence ID" value="NC_004606.1"/>
</dbReference>
<dbReference type="SMR" id="P0DC67"/>
<dbReference type="GeneID" id="69900642"/>
<dbReference type="KEGG" id="sps:SPs0798"/>
<dbReference type="HOGENOM" id="CLU_049611_1_0_9"/>
<dbReference type="UniPathway" id="UPA00629">
    <property type="reaction ID" value="UER00684"/>
</dbReference>
<dbReference type="GO" id="GO:0005737">
    <property type="term" value="C:cytoplasm"/>
    <property type="evidence" value="ECO:0007669"/>
    <property type="project" value="TreeGrafter"/>
</dbReference>
<dbReference type="GO" id="GO:0004342">
    <property type="term" value="F:glucosamine-6-phosphate deaminase activity"/>
    <property type="evidence" value="ECO:0007669"/>
    <property type="project" value="UniProtKB-UniRule"/>
</dbReference>
<dbReference type="GO" id="GO:0042802">
    <property type="term" value="F:identical protein binding"/>
    <property type="evidence" value="ECO:0007669"/>
    <property type="project" value="TreeGrafter"/>
</dbReference>
<dbReference type="GO" id="GO:0005975">
    <property type="term" value="P:carbohydrate metabolic process"/>
    <property type="evidence" value="ECO:0007669"/>
    <property type="project" value="InterPro"/>
</dbReference>
<dbReference type="GO" id="GO:0006043">
    <property type="term" value="P:glucosamine catabolic process"/>
    <property type="evidence" value="ECO:0007669"/>
    <property type="project" value="TreeGrafter"/>
</dbReference>
<dbReference type="GO" id="GO:0006046">
    <property type="term" value="P:N-acetylglucosamine catabolic process"/>
    <property type="evidence" value="ECO:0007669"/>
    <property type="project" value="TreeGrafter"/>
</dbReference>
<dbReference type="GO" id="GO:0019262">
    <property type="term" value="P:N-acetylneuraminate catabolic process"/>
    <property type="evidence" value="ECO:0007669"/>
    <property type="project" value="UniProtKB-UniRule"/>
</dbReference>
<dbReference type="CDD" id="cd01399">
    <property type="entry name" value="GlcN6P_deaminase"/>
    <property type="match status" value="1"/>
</dbReference>
<dbReference type="FunFam" id="3.40.50.1360:FF:000003">
    <property type="entry name" value="Glucosamine-6-phosphate deaminase"/>
    <property type="match status" value="1"/>
</dbReference>
<dbReference type="Gene3D" id="3.40.50.1360">
    <property type="match status" value="1"/>
</dbReference>
<dbReference type="HAMAP" id="MF_01241">
    <property type="entry name" value="GlcN6P_deamin"/>
    <property type="match status" value="1"/>
</dbReference>
<dbReference type="InterPro" id="IPR006148">
    <property type="entry name" value="Glc/Gal-6P_isomerase"/>
</dbReference>
<dbReference type="InterPro" id="IPR004547">
    <property type="entry name" value="Glucosamine6P_isomerase"/>
</dbReference>
<dbReference type="InterPro" id="IPR018321">
    <property type="entry name" value="Glucosamine6P_isomerase_CS"/>
</dbReference>
<dbReference type="InterPro" id="IPR037171">
    <property type="entry name" value="NagB/RpiA_transferase-like"/>
</dbReference>
<dbReference type="NCBIfam" id="TIGR00502">
    <property type="entry name" value="nagB"/>
    <property type="match status" value="1"/>
</dbReference>
<dbReference type="PANTHER" id="PTHR11280">
    <property type="entry name" value="GLUCOSAMINE-6-PHOSPHATE ISOMERASE"/>
    <property type="match status" value="1"/>
</dbReference>
<dbReference type="PANTHER" id="PTHR11280:SF5">
    <property type="entry name" value="GLUCOSAMINE-6-PHOSPHATE ISOMERASE"/>
    <property type="match status" value="1"/>
</dbReference>
<dbReference type="Pfam" id="PF01182">
    <property type="entry name" value="Glucosamine_iso"/>
    <property type="match status" value="1"/>
</dbReference>
<dbReference type="SUPFAM" id="SSF100950">
    <property type="entry name" value="NagB/RpiA/CoA transferase-like"/>
    <property type="match status" value="1"/>
</dbReference>
<dbReference type="PROSITE" id="PS01161">
    <property type="entry name" value="GLC_GALNAC_ISOMERASE"/>
    <property type="match status" value="1"/>
</dbReference>
<keyword id="KW-0119">Carbohydrate metabolism</keyword>
<keyword id="KW-0378">Hydrolase</keyword>
<gene>
    <name evidence="1" type="primary">nagB</name>
    <name type="ordered locus">SPs0798</name>
</gene>
<accession>P0DC67</accession>
<accession>Q8K6Z4</accession>
<evidence type="ECO:0000255" key="1">
    <source>
        <dbReference type="HAMAP-Rule" id="MF_01241"/>
    </source>
</evidence>
<protein>
    <recommendedName>
        <fullName evidence="1">Glucosamine-6-phosphate deaminase</fullName>
        <ecNumber evidence="1">3.5.99.6</ecNumber>
    </recommendedName>
    <alternativeName>
        <fullName evidence="1">GlcN6P deaminase</fullName>
        <shortName evidence="1">GNPDA</shortName>
    </alternativeName>
    <alternativeName>
        <fullName evidence="1">Glucosamine-6-phosphate isomerase</fullName>
    </alternativeName>
</protein>
<organism>
    <name type="scientific">Streptococcus pyogenes serotype M3 (strain SSI-1)</name>
    <dbReference type="NCBI Taxonomy" id="193567"/>
    <lineage>
        <taxon>Bacteria</taxon>
        <taxon>Bacillati</taxon>
        <taxon>Bacillota</taxon>
        <taxon>Bacilli</taxon>
        <taxon>Lactobacillales</taxon>
        <taxon>Streptococcaceae</taxon>
        <taxon>Streptococcus</taxon>
    </lineage>
</organism>